<keyword id="KW-0342">GTP-binding</keyword>
<keyword id="KW-0547">Nucleotide-binding</keyword>
<keyword id="KW-1185">Reference proteome</keyword>
<keyword id="KW-0677">Repeat</keyword>
<keyword id="KW-0690">Ribosome biogenesis</keyword>
<gene>
    <name evidence="1" type="primary">der</name>
    <name type="synonym">engA</name>
    <name type="synonym">yphC</name>
    <name type="ordered locus">HH_1539</name>
</gene>
<proteinExistence type="inferred from homology"/>
<organism>
    <name type="scientific">Helicobacter hepaticus (strain ATCC 51449 / 3B1)</name>
    <dbReference type="NCBI Taxonomy" id="235279"/>
    <lineage>
        <taxon>Bacteria</taxon>
        <taxon>Pseudomonadati</taxon>
        <taxon>Campylobacterota</taxon>
        <taxon>Epsilonproteobacteria</taxon>
        <taxon>Campylobacterales</taxon>
        <taxon>Helicobacteraceae</taxon>
        <taxon>Helicobacter</taxon>
    </lineage>
</organism>
<dbReference type="EMBL" id="AE017125">
    <property type="protein sequence ID" value="AAP78136.1"/>
    <property type="molecule type" value="Genomic_DNA"/>
</dbReference>
<dbReference type="RefSeq" id="WP_011116379.1">
    <property type="nucleotide sequence ID" value="NC_004917.1"/>
</dbReference>
<dbReference type="SMR" id="Q7VFY6"/>
<dbReference type="STRING" id="235279.HH_1539"/>
<dbReference type="KEGG" id="hhe:HH_1539"/>
<dbReference type="eggNOG" id="COG1160">
    <property type="taxonomic scope" value="Bacteria"/>
</dbReference>
<dbReference type="HOGENOM" id="CLU_016077_6_2_7"/>
<dbReference type="OrthoDB" id="9805918at2"/>
<dbReference type="Proteomes" id="UP000002495">
    <property type="component" value="Chromosome"/>
</dbReference>
<dbReference type="GO" id="GO:0005525">
    <property type="term" value="F:GTP binding"/>
    <property type="evidence" value="ECO:0007669"/>
    <property type="project" value="UniProtKB-UniRule"/>
</dbReference>
<dbReference type="GO" id="GO:0043022">
    <property type="term" value="F:ribosome binding"/>
    <property type="evidence" value="ECO:0007669"/>
    <property type="project" value="TreeGrafter"/>
</dbReference>
<dbReference type="GO" id="GO:0042254">
    <property type="term" value="P:ribosome biogenesis"/>
    <property type="evidence" value="ECO:0007669"/>
    <property type="project" value="UniProtKB-KW"/>
</dbReference>
<dbReference type="CDD" id="cd01894">
    <property type="entry name" value="EngA1"/>
    <property type="match status" value="1"/>
</dbReference>
<dbReference type="CDD" id="cd01895">
    <property type="entry name" value="EngA2"/>
    <property type="match status" value="1"/>
</dbReference>
<dbReference type="FunFam" id="3.30.300.20:FF:000004">
    <property type="entry name" value="GTPase Der"/>
    <property type="match status" value="1"/>
</dbReference>
<dbReference type="FunFam" id="3.40.50.300:FF:000494">
    <property type="entry name" value="tRNA modification GTPase MnmE"/>
    <property type="match status" value="2"/>
</dbReference>
<dbReference type="Gene3D" id="3.30.300.20">
    <property type="match status" value="1"/>
</dbReference>
<dbReference type="Gene3D" id="3.40.50.300">
    <property type="entry name" value="P-loop containing nucleotide triphosphate hydrolases"/>
    <property type="match status" value="2"/>
</dbReference>
<dbReference type="HAMAP" id="MF_00195">
    <property type="entry name" value="GTPase_Der"/>
    <property type="match status" value="1"/>
</dbReference>
<dbReference type="InterPro" id="IPR031166">
    <property type="entry name" value="G_ENGA"/>
</dbReference>
<dbReference type="InterPro" id="IPR006073">
    <property type="entry name" value="GTP-bd"/>
</dbReference>
<dbReference type="InterPro" id="IPR016484">
    <property type="entry name" value="GTPase_Der"/>
</dbReference>
<dbReference type="InterPro" id="IPR032859">
    <property type="entry name" value="KH_dom-like"/>
</dbReference>
<dbReference type="InterPro" id="IPR015946">
    <property type="entry name" value="KH_dom-like_a/b"/>
</dbReference>
<dbReference type="InterPro" id="IPR027417">
    <property type="entry name" value="P-loop_NTPase"/>
</dbReference>
<dbReference type="InterPro" id="IPR005225">
    <property type="entry name" value="Small_GTP-bd"/>
</dbReference>
<dbReference type="NCBIfam" id="TIGR03594">
    <property type="entry name" value="GTPase_EngA"/>
    <property type="match status" value="1"/>
</dbReference>
<dbReference type="NCBIfam" id="TIGR00231">
    <property type="entry name" value="small_GTP"/>
    <property type="match status" value="2"/>
</dbReference>
<dbReference type="PANTHER" id="PTHR43834">
    <property type="entry name" value="GTPASE DER"/>
    <property type="match status" value="1"/>
</dbReference>
<dbReference type="PANTHER" id="PTHR43834:SF6">
    <property type="entry name" value="GTPASE DER"/>
    <property type="match status" value="1"/>
</dbReference>
<dbReference type="Pfam" id="PF14714">
    <property type="entry name" value="KH_dom-like"/>
    <property type="match status" value="1"/>
</dbReference>
<dbReference type="Pfam" id="PF01926">
    <property type="entry name" value="MMR_HSR1"/>
    <property type="match status" value="2"/>
</dbReference>
<dbReference type="PIRSF" id="PIRSF006485">
    <property type="entry name" value="GTP-binding_EngA"/>
    <property type="match status" value="1"/>
</dbReference>
<dbReference type="PRINTS" id="PR00326">
    <property type="entry name" value="GTP1OBG"/>
</dbReference>
<dbReference type="SUPFAM" id="SSF52540">
    <property type="entry name" value="P-loop containing nucleoside triphosphate hydrolases"/>
    <property type="match status" value="2"/>
</dbReference>
<dbReference type="PROSITE" id="PS51712">
    <property type="entry name" value="G_ENGA"/>
    <property type="match status" value="2"/>
</dbReference>
<name>DER_HELHP</name>
<protein>
    <recommendedName>
        <fullName evidence="1">GTPase Der</fullName>
    </recommendedName>
    <alternativeName>
        <fullName evidence="1">GTP-binding protein EngA</fullName>
    </alternativeName>
</protein>
<accession>Q7VFY6</accession>
<feature type="chain" id="PRO_0000178999" description="GTPase Der">
    <location>
        <begin position="1"/>
        <end position="487"/>
    </location>
</feature>
<feature type="domain" description="EngA-type G 1">
    <location>
        <begin position="2"/>
        <end position="164"/>
    </location>
</feature>
<feature type="domain" description="EngA-type G 2">
    <location>
        <begin position="203"/>
        <end position="374"/>
    </location>
</feature>
<feature type="domain" description="KH-like" evidence="1">
    <location>
        <begin position="375"/>
        <end position="459"/>
    </location>
</feature>
<feature type="region of interest" description="Disordered" evidence="2">
    <location>
        <begin position="459"/>
        <end position="487"/>
    </location>
</feature>
<feature type="compositionally biased region" description="Basic and acidic residues" evidence="2">
    <location>
        <begin position="459"/>
        <end position="480"/>
    </location>
</feature>
<feature type="binding site" evidence="1">
    <location>
        <begin position="8"/>
        <end position="15"/>
    </location>
    <ligand>
        <name>GTP</name>
        <dbReference type="ChEBI" id="CHEBI:37565"/>
        <label>1</label>
    </ligand>
</feature>
<feature type="binding site" evidence="1">
    <location>
        <begin position="55"/>
        <end position="59"/>
    </location>
    <ligand>
        <name>GTP</name>
        <dbReference type="ChEBI" id="CHEBI:37565"/>
        <label>1</label>
    </ligand>
</feature>
<feature type="binding site" evidence="1">
    <location>
        <begin position="116"/>
        <end position="119"/>
    </location>
    <ligand>
        <name>GTP</name>
        <dbReference type="ChEBI" id="CHEBI:37565"/>
        <label>1</label>
    </ligand>
</feature>
<feature type="binding site" evidence="1">
    <location>
        <begin position="209"/>
        <end position="216"/>
    </location>
    <ligand>
        <name>GTP</name>
        <dbReference type="ChEBI" id="CHEBI:37565"/>
        <label>2</label>
    </ligand>
</feature>
<feature type="binding site" evidence="1">
    <location>
        <begin position="256"/>
        <end position="260"/>
    </location>
    <ligand>
        <name>GTP</name>
        <dbReference type="ChEBI" id="CHEBI:37565"/>
        <label>2</label>
    </ligand>
</feature>
<feature type="binding site" evidence="1">
    <location>
        <begin position="320"/>
        <end position="323"/>
    </location>
    <ligand>
        <name>GTP</name>
        <dbReference type="ChEBI" id="CHEBI:37565"/>
        <label>2</label>
    </ligand>
</feature>
<reference key="1">
    <citation type="journal article" date="2003" name="Proc. Natl. Acad. Sci. U.S.A.">
        <title>The complete genome sequence of the carcinogenic bacterium Helicobacter hepaticus.</title>
        <authorList>
            <person name="Suerbaum S."/>
            <person name="Josenhans C."/>
            <person name="Sterzenbach T."/>
            <person name="Drescher B."/>
            <person name="Brandt P."/>
            <person name="Bell M."/>
            <person name="Droege M."/>
            <person name="Fartmann B."/>
            <person name="Fischer H.-P."/>
            <person name="Ge Z."/>
            <person name="Hoerster A."/>
            <person name="Holland R."/>
            <person name="Klein K."/>
            <person name="Koenig J."/>
            <person name="Macko L."/>
            <person name="Mendz G.L."/>
            <person name="Nyakatura G."/>
            <person name="Schauer D.B."/>
            <person name="Shen Z."/>
            <person name="Weber J."/>
            <person name="Frosch M."/>
            <person name="Fox J.G."/>
        </authorList>
    </citation>
    <scope>NUCLEOTIDE SEQUENCE [LARGE SCALE GENOMIC DNA]</scope>
    <source>
        <strain>ATCC 51449 / 3B1</strain>
    </source>
</reference>
<comment type="function">
    <text evidence="1">GTPase that plays an essential role in the late steps of ribosome biogenesis.</text>
</comment>
<comment type="subunit">
    <text evidence="1">Associates with the 50S ribosomal subunit.</text>
</comment>
<comment type="similarity">
    <text evidence="1">Belongs to the TRAFAC class TrmE-Era-EngA-EngB-Septin-like GTPase superfamily. EngA (Der) GTPase family.</text>
</comment>
<sequence length="487" mass="54563">MKTIAILGKPNVGKSSLFNRLIKQHLAITSDVSGTTRDVKRACFDISGVEVELLDTGGIDKAEGLFAKVSANSLKAGQEADLVLYMVDGNVVPQDDDIAYFRTIQKAKKPLVLVINKVDNDKIKQQAWDFACFGAEQMYFISVHHNRGLSILLEAIFELLSLAKEQSLSNNLRSQMDNEEIDESLEEFLGILESTPNKSEENIAVGIIGRVNVGKSSLLNALLGKERSVVSEVAGTTIDPVDDEMDIEGKRVRFVDTAGIRRASKIWGIEKFALLRTNAALAQSHIVILVLDASESFVELDEKISSLIPKHALGVIVVLNKWDKKHKEYKEIIKEFKHRFPFLSFAPVMTLSALNGRNIDKLKKEILKVYQRFAYRIPTSALNDVIAQAVAHHHIPSDHGKIVKIYYATQYATHPPQIALVSNRPESLHFSYKRYIINMLREQFDFEGVPILLSVKGKNAKDEENTSAKKESPSKVSHRESKNRRFV</sequence>
<evidence type="ECO:0000255" key="1">
    <source>
        <dbReference type="HAMAP-Rule" id="MF_00195"/>
    </source>
</evidence>
<evidence type="ECO:0000256" key="2">
    <source>
        <dbReference type="SAM" id="MobiDB-lite"/>
    </source>
</evidence>